<sequence length="331" mass="37067">MSSDTLHKYEALPEDHRNVALRPCLIEEFVGQTEVIKNLKVFIQSAYERREPMDHVLLYGPPGLGKTTLAHIIAKELKVNFRSTAGPLLSKAGDLAAILTNLQPMDVLFIDEIHRLNRNIEEVLYSAMEDYCLDIVVGEGCGARTLKIDIPAFTLIGATTRFGLISNPLRDRFGIPLHLEFYSVDELVLVIKRAAGVICTSIDDSGAREIASRSRGTPRIALRLFRRVRDFLEFERKHGTIDGNFANSALFRLGIDGAGFDKMDLKYLKFVFEAKGPVGIDTIASALSEDVGNIEETIEPYLIKTCFIQRTPRGRVLTQKGFEYLLSSKYI</sequence>
<comment type="function">
    <text evidence="1">The RuvA-RuvB-RuvC complex processes Holliday junction (HJ) DNA during genetic recombination and DNA repair, while the RuvA-RuvB complex plays an important role in the rescue of blocked DNA replication forks via replication fork reversal (RFR). RuvA specifically binds to HJ cruciform DNA, conferring on it an open structure. The RuvB hexamer acts as an ATP-dependent pump, pulling dsDNA into and through the RuvAB complex. RuvB forms 2 homohexamers on either side of HJ DNA bound by 1 or 2 RuvA tetramers; 4 subunits per hexamer contact DNA at a time. Coordinated motions by a converter formed by DNA-disengaged RuvB subunits stimulates ATP hydrolysis and nucleotide exchange. Immobilization of the converter enables RuvB to convert the ATP-contained energy into a lever motion, pulling 2 nucleotides of DNA out of the RuvA tetramer per ATP hydrolyzed, thus driving DNA branch migration. The RuvB motors rotate together with the DNA substrate, which together with the progressing nucleotide cycle form the mechanistic basis for DNA recombination by continuous HJ branch migration. Branch migration allows RuvC to scan DNA until it finds its consensus sequence, where it cleaves and resolves cruciform DNA.</text>
</comment>
<comment type="catalytic activity">
    <reaction evidence="1">
        <text>ATP + H2O = ADP + phosphate + H(+)</text>
        <dbReference type="Rhea" id="RHEA:13065"/>
        <dbReference type="ChEBI" id="CHEBI:15377"/>
        <dbReference type="ChEBI" id="CHEBI:15378"/>
        <dbReference type="ChEBI" id="CHEBI:30616"/>
        <dbReference type="ChEBI" id="CHEBI:43474"/>
        <dbReference type="ChEBI" id="CHEBI:456216"/>
    </reaction>
</comment>
<comment type="subunit">
    <text evidence="1">Homohexamer. Forms an RuvA(8)-RuvB(12)-Holliday junction (HJ) complex. HJ DNA is sandwiched between 2 RuvA tetramers; dsDNA enters through RuvA and exits via RuvB. An RuvB hexamer assembles on each DNA strand where it exits the tetramer. Each RuvB hexamer is contacted by two RuvA subunits (via domain III) on 2 adjacent RuvB subunits; this complex drives branch migration. In the full resolvosome a probable DNA-RuvA(4)-RuvB(12)-RuvC(2) complex forms which resolves the HJ.</text>
</comment>
<comment type="subcellular location">
    <subcellularLocation>
        <location evidence="1">Cytoplasm</location>
    </subcellularLocation>
</comment>
<comment type="domain">
    <text evidence="1">Has 3 domains, the large (RuvB-L) and small ATPase (RuvB-S) domains and the C-terminal head (RuvB-H) domain. The head domain binds DNA, while the ATPase domains jointly bind ATP, ADP or are empty depending on the state of the subunit in the translocation cycle. During a single DNA translocation step the structure of each domain remains the same, but their relative positions change.</text>
</comment>
<comment type="similarity">
    <text evidence="1">Belongs to the RuvB family.</text>
</comment>
<accession>Q5PBM1</accession>
<name>RUVB_ANAMM</name>
<gene>
    <name evidence="1" type="primary">ruvB</name>
    <name type="ordered locus">AM172</name>
</gene>
<keyword id="KW-0067">ATP-binding</keyword>
<keyword id="KW-0963">Cytoplasm</keyword>
<keyword id="KW-0227">DNA damage</keyword>
<keyword id="KW-0233">DNA recombination</keyword>
<keyword id="KW-0234">DNA repair</keyword>
<keyword id="KW-0238">DNA-binding</keyword>
<keyword id="KW-0378">Hydrolase</keyword>
<keyword id="KW-0547">Nucleotide-binding</keyword>
<reference key="1">
    <citation type="journal article" date="2005" name="Proc. Natl. Acad. Sci. U.S.A.">
        <title>Complete genome sequencing of Anaplasma marginale reveals that the surface is skewed to two superfamilies of outer membrane proteins.</title>
        <authorList>
            <person name="Brayton K.A."/>
            <person name="Kappmeyer L.S."/>
            <person name="Herndon D.R."/>
            <person name="Dark M.J."/>
            <person name="Tibbals D.L."/>
            <person name="Palmer G.H."/>
            <person name="McGuire T.C."/>
            <person name="Knowles D.P. Jr."/>
        </authorList>
    </citation>
    <scope>NUCLEOTIDE SEQUENCE [LARGE SCALE GENOMIC DNA]</scope>
    <source>
        <strain>St. Maries</strain>
    </source>
</reference>
<evidence type="ECO:0000255" key="1">
    <source>
        <dbReference type="HAMAP-Rule" id="MF_00016"/>
    </source>
</evidence>
<proteinExistence type="inferred from homology"/>
<dbReference type="EC" id="3.6.4.-" evidence="1"/>
<dbReference type="EMBL" id="CP000030">
    <property type="protein sequence ID" value="AAV86308.1"/>
    <property type="molecule type" value="Genomic_DNA"/>
</dbReference>
<dbReference type="RefSeq" id="WP_011114152.1">
    <property type="nucleotide sequence ID" value="NC_004842.2"/>
</dbReference>
<dbReference type="SMR" id="Q5PBM1"/>
<dbReference type="KEGG" id="ama:AM172"/>
<dbReference type="HOGENOM" id="CLU_055599_1_0_5"/>
<dbReference type="GO" id="GO:0005737">
    <property type="term" value="C:cytoplasm"/>
    <property type="evidence" value="ECO:0007669"/>
    <property type="project" value="UniProtKB-SubCell"/>
</dbReference>
<dbReference type="GO" id="GO:0048476">
    <property type="term" value="C:Holliday junction resolvase complex"/>
    <property type="evidence" value="ECO:0007669"/>
    <property type="project" value="UniProtKB-UniRule"/>
</dbReference>
<dbReference type="GO" id="GO:0005524">
    <property type="term" value="F:ATP binding"/>
    <property type="evidence" value="ECO:0007669"/>
    <property type="project" value="UniProtKB-UniRule"/>
</dbReference>
<dbReference type="GO" id="GO:0016887">
    <property type="term" value="F:ATP hydrolysis activity"/>
    <property type="evidence" value="ECO:0007669"/>
    <property type="project" value="InterPro"/>
</dbReference>
<dbReference type="GO" id="GO:0000400">
    <property type="term" value="F:four-way junction DNA binding"/>
    <property type="evidence" value="ECO:0007669"/>
    <property type="project" value="UniProtKB-UniRule"/>
</dbReference>
<dbReference type="GO" id="GO:0009378">
    <property type="term" value="F:four-way junction helicase activity"/>
    <property type="evidence" value="ECO:0007669"/>
    <property type="project" value="InterPro"/>
</dbReference>
<dbReference type="GO" id="GO:0006310">
    <property type="term" value="P:DNA recombination"/>
    <property type="evidence" value="ECO:0007669"/>
    <property type="project" value="UniProtKB-UniRule"/>
</dbReference>
<dbReference type="GO" id="GO:0006281">
    <property type="term" value="P:DNA repair"/>
    <property type="evidence" value="ECO:0007669"/>
    <property type="project" value="UniProtKB-UniRule"/>
</dbReference>
<dbReference type="CDD" id="cd00009">
    <property type="entry name" value="AAA"/>
    <property type="match status" value="1"/>
</dbReference>
<dbReference type="Gene3D" id="1.10.8.60">
    <property type="match status" value="1"/>
</dbReference>
<dbReference type="Gene3D" id="3.40.50.300">
    <property type="entry name" value="P-loop containing nucleotide triphosphate hydrolases"/>
    <property type="match status" value="1"/>
</dbReference>
<dbReference type="Gene3D" id="1.10.10.10">
    <property type="entry name" value="Winged helix-like DNA-binding domain superfamily/Winged helix DNA-binding domain"/>
    <property type="match status" value="1"/>
</dbReference>
<dbReference type="HAMAP" id="MF_00016">
    <property type="entry name" value="DNA_HJ_migration_RuvB"/>
    <property type="match status" value="1"/>
</dbReference>
<dbReference type="InterPro" id="IPR003593">
    <property type="entry name" value="AAA+_ATPase"/>
</dbReference>
<dbReference type="InterPro" id="IPR041445">
    <property type="entry name" value="AAA_lid_4"/>
</dbReference>
<dbReference type="InterPro" id="IPR004605">
    <property type="entry name" value="DNA_helicase_Holl-junc_RuvB"/>
</dbReference>
<dbReference type="InterPro" id="IPR027417">
    <property type="entry name" value="P-loop_NTPase"/>
</dbReference>
<dbReference type="InterPro" id="IPR008824">
    <property type="entry name" value="RuvB-like_N"/>
</dbReference>
<dbReference type="InterPro" id="IPR008823">
    <property type="entry name" value="RuvB_C"/>
</dbReference>
<dbReference type="InterPro" id="IPR036388">
    <property type="entry name" value="WH-like_DNA-bd_sf"/>
</dbReference>
<dbReference type="InterPro" id="IPR036390">
    <property type="entry name" value="WH_DNA-bd_sf"/>
</dbReference>
<dbReference type="NCBIfam" id="NF000868">
    <property type="entry name" value="PRK00080.1"/>
    <property type="match status" value="1"/>
</dbReference>
<dbReference type="NCBIfam" id="TIGR00635">
    <property type="entry name" value="ruvB"/>
    <property type="match status" value="1"/>
</dbReference>
<dbReference type="PANTHER" id="PTHR42848">
    <property type="match status" value="1"/>
</dbReference>
<dbReference type="PANTHER" id="PTHR42848:SF1">
    <property type="entry name" value="HOLLIDAY JUNCTION BRANCH MIGRATION COMPLEX SUBUNIT RUVB"/>
    <property type="match status" value="1"/>
</dbReference>
<dbReference type="Pfam" id="PF17864">
    <property type="entry name" value="AAA_lid_4"/>
    <property type="match status" value="1"/>
</dbReference>
<dbReference type="Pfam" id="PF05491">
    <property type="entry name" value="RuvB_C"/>
    <property type="match status" value="1"/>
</dbReference>
<dbReference type="Pfam" id="PF05496">
    <property type="entry name" value="RuvB_N"/>
    <property type="match status" value="1"/>
</dbReference>
<dbReference type="SMART" id="SM00382">
    <property type="entry name" value="AAA"/>
    <property type="match status" value="1"/>
</dbReference>
<dbReference type="SUPFAM" id="SSF52540">
    <property type="entry name" value="P-loop containing nucleoside triphosphate hydrolases"/>
    <property type="match status" value="1"/>
</dbReference>
<dbReference type="SUPFAM" id="SSF46785">
    <property type="entry name" value="Winged helix' DNA-binding domain"/>
    <property type="match status" value="1"/>
</dbReference>
<organism>
    <name type="scientific">Anaplasma marginale (strain St. Maries)</name>
    <dbReference type="NCBI Taxonomy" id="234826"/>
    <lineage>
        <taxon>Bacteria</taxon>
        <taxon>Pseudomonadati</taxon>
        <taxon>Pseudomonadota</taxon>
        <taxon>Alphaproteobacteria</taxon>
        <taxon>Rickettsiales</taxon>
        <taxon>Anaplasmataceae</taxon>
        <taxon>Anaplasma</taxon>
    </lineage>
</organism>
<protein>
    <recommendedName>
        <fullName evidence="1">Holliday junction branch migration complex subunit RuvB</fullName>
        <ecNumber evidence="1">3.6.4.-</ecNumber>
    </recommendedName>
</protein>
<feature type="chain" id="PRO_0000235347" description="Holliday junction branch migration complex subunit RuvB">
    <location>
        <begin position="1"/>
        <end position="331"/>
    </location>
</feature>
<feature type="region of interest" description="Large ATPase domain (RuvB-L)" evidence="1">
    <location>
        <begin position="1"/>
        <end position="182"/>
    </location>
</feature>
<feature type="region of interest" description="Small ATPAse domain (RuvB-S)" evidence="1">
    <location>
        <begin position="183"/>
        <end position="254"/>
    </location>
</feature>
<feature type="region of interest" description="Head domain (RuvB-H)" evidence="1">
    <location>
        <begin position="257"/>
        <end position="331"/>
    </location>
</feature>
<feature type="binding site" evidence="1">
    <location>
        <position position="21"/>
    </location>
    <ligand>
        <name>ATP</name>
        <dbReference type="ChEBI" id="CHEBI:30616"/>
    </ligand>
</feature>
<feature type="binding site" evidence="1">
    <location>
        <position position="22"/>
    </location>
    <ligand>
        <name>ATP</name>
        <dbReference type="ChEBI" id="CHEBI:30616"/>
    </ligand>
</feature>
<feature type="binding site" evidence="1">
    <location>
        <position position="63"/>
    </location>
    <ligand>
        <name>ATP</name>
        <dbReference type="ChEBI" id="CHEBI:30616"/>
    </ligand>
</feature>
<feature type="binding site" evidence="1">
    <location>
        <position position="66"/>
    </location>
    <ligand>
        <name>ATP</name>
        <dbReference type="ChEBI" id="CHEBI:30616"/>
    </ligand>
</feature>
<feature type="binding site" evidence="1">
    <location>
        <position position="67"/>
    </location>
    <ligand>
        <name>ATP</name>
        <dbReference type="ChEBI" id="CHEBI:30616"/>
    </ligand>
</feature>
<feature type="binding site" evidence="1">
    <location>
        <position position="67"/>
    </location>
    <ligand>
        <name>Mg(2+)</name>
        <dbReference type="ChEBI" id="CHEBI:18420"/>
    </ligand>
</feature>
<feature type="binding site" evidence="1">
    <location>
        <position position="68"/>
    </location>
    <ligand>
        <name>ATP</name>
        <dbReference type="ChEBI" id="CHEBI:30616"/>
    </ligand>
</feature>
<feature type="binding site" evidence="1">
    <location>
        <begin position="129"/>
        <end position="131"/>
    </location>
    <ligand>
        <name>ATP</name>
        <dbReference type="ChEBI" id="CHEBI:30616"/>
    </ligand>
</feature>
<feature type="binding site" evidence="1">
    <location>
        <position position="172"/>
    </location>
    <ligand>
        <name>ATP</name>
        <dbReference type="ChEBI" id="CHEBI:30616"/>
    </ligand>
</feature>
<feature type="binding site" evidence="1">
    <location>
        <position position="182"/>
    </location>
    <ligand>
        <name>ATP</name>
        <dbReference type="ChEBI" id="CHEBI:30616"/>
    </ligand>
</feature>
<feature type="binding site" evidence="1">
    <location>
        <position position="219"/>
    </location>
    <ligand>
        <name>ATP</name>
        <dbReference type="ChEBI" id="CHEBI:30616"/>
    </ligand>
</feature>
<feature type="binding site" evidence="1">
    <location>
        <position position="310"/>
    </location>
    <ligand>
        <name>DNA</name>
        <dbReference type="ChEBI" id="CHEBI:16991"/>
    </ligand>
</feature>
<feature type="binding site" evidence="1">
    <location>
        <position position="315"/>
    </location>
    <ligand>
        <name>DNA</name>
        <dbReference type="ChEBI" id="CHEBI:16991"/>
    </ligand>
</feature>